<dbReference type="EC" id="2.4.1.315"/>
<dbReference type="EMBL" id="L77246">
    <property type="protein sequence ID" value="AAA96624.1"/>
    <property type="molecule type" value="Genomic_DNA"/>
</dbReference>
<dbReference type="EMBL" id="AL009126">
    <property type="protein sequence ID" value="CAB14110.1"/>
    <property type="molecule type" value="Genomic_DNA"/>
</dbReference>
<dbReference type="PIR" id="C69935">
    <property type="entry name" value="C69935"/>
</dbReference>
<dbReference type="RefSeq" id="NP_390075.1">
    <property type="nucleotide sequence ID" value="NC_000964.3"/>
</dbReference>
<dbReference type="RefSeq" id="WP_003246153.1">
    <property type="nucleotide sequence ID" value="NZ_OZ025638.1"/>
</dbReference>
<dbReference type="SMR" id="P54166"/>
<dbReference type="FunCoup" id="P54166">
    <property type="interactions" value="129"/>
</dbReference>
<dbReference type="IntAct" id="P54166">
    <property type="interactions" value="2"/>
</dbReference>
<dbReference type="STRING" id="224308.BSU21920"/>
<dbReference type="CAZy" id="GT28">
    <property type="family name" value="Glycosyltransferase Family 28"/>
</dbReference>
<dbReference type="PaxDb" id="224308-BSU21920"/>
<dbReference type="DNASU" id="939081"/>
<dbReference type="EnsemblBacteria" id="CAB14110">
    <property type="protein sequence ID" value="CAB14110"/>
    <property type="gene ID" value="BSU_21920"/>
</dbReference>
<dbReference type="GeneID" id="939081"/>
<dbReference type="KEGG" id="bsu:BSU21920"/>
<dbReference type="PATRIC" id="fig|224308.179.peg.2394"/>
<dbReference type="eggNOG" id="COG0707">
    <property type="taxonomic scope" value="Bacteria"/>
</dbReference>
<dbReference type="InParanoid" id="P54166"/>
<dbReference type="OrthoDB" id="9815663at2"/>
<dbReference type="PhylomeDB" id="P54166"/>
<dbReference type="BioCyc" id="BSUB:BSU21920-MONOMER"/>
<dbReference type="BRENDA" id="2.4.1.315">
    <property type="organism ID" value="658"/>
</dbReference>
<dbReference type="BRENDA" id="2.4.1.337">
    <property type="organism ID" value="658"/>
</dbReference>
<dbReference type="UniPathway" id="UPA00894"/>
<dbReference type="Proteomes" id="UP000001570">
    <property type="component" value="Chromosome"/>
</dbReference>
<dbReference type="GO" id="GO:0005886">
    <property type="term" value="C:plasma membrane"/>
    <property type="evidence" value="ECO:0007669"/>
    <property type="project" value="UniProtKB-SubCell"/>
</dbReference>
<dbReference type="GO" id="GO:0047228">
    <property type="term" value="F:1,2-diacylglycerol 3-glucosyltransferase activity"/>
    <property type="evidence" value="ECO:0000314"/>
    <property type="project" value="UniProtKB"/>
</dbReference>
<dbReference type="GO" id="GO:0009246">
    <property type="term" value="P:enterobacterial common antigen biosynthetic process"/>
    <property type="evidence" value="ECO:0007669"/>
    <property type="project" value="UniProtKB-UniPathway"/>
</dbReference>
<dbReference type="GO" id="GO:0009247">
    <property type="term" value="P:glycolipid biosynthetic process"/>
    <property type="evidence" value="ECO:0007669"/>
    <property type="project" value="UniProtKB-UniRule"/>
</dbReference>
<dbReference type="GO" id="GO:0070395">
    <property type="term" value="P:lipoteichoic acid biosynthetic process"/>
    <property type="evidence" value="ECO:0007669"/>
    <property type="project" value="UniProtKB-UniRule"/>
</dbReference>
<dbReference type="CDD" id="cd17507">
    <property type="entry name" value="GT28_Beta-DGS-like"/>
    <property type="match status" value="1"/>
</dbReference>
<dbReference type="Gene3D" id="3.40.50.2000">
    <property type="entry name" value="Glycogen Phosphorylase B"/>
    <property type="match status" value="1"/>
</dbReference>
<dbReference type="HAMAP" id="MF_01280">
    <property type="entry name" value="Diacylglyc_glucosyltr"/>
    <property type="match status" value="1"/>
</dbReference>
<dbReference type="InterPro" id="IPR009695">
    <property type="entry name" value="Diacylglyc_glucosyltr_N"/>
</dbReference>
<dbReference type="InterPro" id="IPR001296">
    <property type="entry name" value="Glyco_trans_1"/>
</dbReference>
<dbReference type="InterPro" id="IPR050519">
    <property type="entry name" value="Glycosyltransf_28_UgtP"/>
</dbReference>
<dbReference type="InterPro" id="IPR023589">
    <property type="entry name" value="Pro_diacylglycrl_glcsylTrfase"/>
</dbReference>
<dbReference type="NCBIfam" id="NF010135">
    <property type="entry name" value="PRK13609.1"/>
    <property type="match status" value="1"/>
</dbReference>
<dbReference type="PANTHER" id="PTHR43025">
    <property type="entry name" value="MONOGALACTOSYLDIACYLGLYCEROL SYNTHASE"/>
    <property type="match status" value="1"/>
</dbReference>
<dbReference type="PANTHER" id="PTHR43025:SF3">
    <property type="entry name" value="MONOGALACTOSYLDIACYLGLYCEROL SYNTHASE 1, CHLOROPLASTIC"/>
    <property type="match status" value="1"/>
</dbReference>
<dbReference type="Pfam" id="PF00534">
    <property type="entry name" value="Glycos_transf_1"/>
    <property type="match status" value="1"/>
</dbReference>
<dbReference type="Pfam" id="PF06925">
    <property type="entry name" value="MGDG_synth"/>
    <property type="match status" value="1"/>
</dbReference>
<dbReference type="SUPFAM" id="SSF53756">
    <property type="entry name" value="UDP-Glycosyltransferase/glycogen phosphorylase"/>
    <property type="match status" value="1"/>
</dbReference>
<protein>
    <recommendedName>
        <fullName evidence="1">Processive diacylglycerol beta-glucosyltransferase</fullName>
        <ecNumber>2.4.1.315</ecNumber>
    </recommendedName>
    <alternativeName>
        <fullName evidence="1">Beta-diglucosyldiacylglycerol synthase</fullName>
        <shortName evidence="1">Beta-DGS</shortName>
        <shortName evidence="1">DGlcDAG synthase</shortName>
        <shortName evidence="1">Glc2-DAG synthase</shortName>
    </alternativeName>
    <alternativeName>
        <fullName evidence="1">Beta-gentiobiosyldiacylglycerol synthase</fullName>
    </alternativeName>
    <alternativeName>
        <fullName evidence="1">Beta-monoglucosyldiacylglycerol synthase</fullName>
        <shortName evidence="1">Beta-MGS</shortName>
        <shortName evidence="1">MGlcDAG synthase</shortName>
    </alternativeName>
    <alternativeName>
        <fullName evidence="1">Beta-triglucosyldiacylglycerol synthase</fullName>
        <shortName evidence="1">TGlcDAG synthase</shortName>
    </alternativeName>
    <alternativeName>
        <fullName>Diglucosyl diacylglycerol synthase (1,6-linking)</fullName>
    </alternativeName>
    <alternativeName>
        <fullName evidence="1">Glucosyl-beta-1,6-glucosyldiacylglycerol synthase</fullName>
    </alternativeName>
    <alternativeName>
        <fullName evidence="1">UDP glucosyltransferase</fullName>
    </alternativeName>
    <alternativeName>
        <fullName evidence="1">UDP-glucose:1,2-diacylglycerol-3-beta-D-glucosyltransferase</fullName>
    </alternativeName>
</protein>
<feature type="chain" id="PRO_0000080314" description="Processive diacylglycerol beta-glucosyltransferase">
    <location>
        <begin position="1"/>
        <end position="382"/>
    </location>
</feature>
<proteinExistence type="evidence at protein level"/>
<evidence type="ECO:0000255" key="1">
    <source>
        <dbReference type="HAMAP-Rule" id="MF_01280"/>
    </source>
</evidence>
<evidence type="ECO:0000269" key="2">
    <source>
    </source>
</evidence>
<evidence type="ECO:0000269" key="3">
    <source>
    </source>
</evidence>
<evidence type="ECO:0000269" key="4">
    <source>
    </source>
</evidence>
<sequence>MNTNKRVLILTANYGNGHVQVAKTLYEQCVRLGFQHVTVSNLYQESNPIVSEVTQYLYLKSFSIGKQFYRLFYYGVDKIYNKRKFNIYFKMGNKRLGELVDEHQPDIIINTFPMIVVPEYRRRTGRVIPTFNVMTDFCLHKIWVHENVDKYYVATDYVKEKLLEIGTHPSNVKITGIPIRPQFEESMPVGPIYKKYNLSPNKKVLLIMAGAHGVLKNVKELCENLVKDDQVQVVVVCGKNTALKESLSALEAENGDKLKVLGYVERIDELFRITDCMITKPGGITLTEATAIGVPVILYKPVPGQEKENANFFEDRGAAIVVNRHEEILESVTSLLADEDTLHRMKKNIKDLHLANSSEVILEDILKESEMMTAKQKAKVLS</sequence>
<accession>P54166</accession>
<gene>
    <name evidence="1" type="primary">ugtP</name>
    <name type="synonym">ypfP</name>
    <name type="ordered locus">BSU21920</name>
</gene>
<organism>
    <name type="scientific">Bacillus subtilis (strain 168)</name>
    <dbReference type="NCBI Taxonomy" id="224308"/>
    <lineage>
        <taxon>Bacteria</taxon>
        <taxon>Bacillati</taxon>
        <taxon>Bacillota</taxon>
        <taxon>Bacilli</taxon>
        <taxon>Bacillales</taxon>
        <taxon>Bacillaceae</taxon>
        <taxon>Bacillus</taxon>
    </lineage>
</organism>
<name>UGTP_BACSU</name>
<comment type="function">
    <text evidence="1 4">Processive glucosyltransferase involved in the biosynthesis of both the bilayer- and non-bilayer-forming membrane glucolipids. Is able to successively transfer up to three glucosyl residues to diacylglycerol (DAG), thereby catalyzing the formation of beta-monoglucosyl-DAG (3-O-(beta-D-glucopyranosyl)-1,2-diacyl-sn-glycerol), beta-diglucosyl-DAG (3-O-(beta-D-glucopyranosyl-beta-(1-&gt;6)-D-glucopyranosyl)-1,2-diacyl-sn-glycerol) and beta-triglucosyl-DAG (3-O-(beta-D-glucopyranosyl-beta-(1-&gt;6)-D-glucopyranosyl-beta-(1-&gt;6)-D-glucopyranosyl)-1,2-diacyl-sn-glycerol). Beta-diglucosyl-DAG is the predominant glycolipid found in Bacillales and is also used as a membrane anchor for lipoteichoic acid (LTA). Also seems to be able to form beta-tetraglucosyl-DAG, although this glycolipid has not been found in B.subtilis membrane. UgtP can only use UDP-glucose as sugar donor.</text>
</comment>
<comment type="catalytic activity">
    <reaction evidence="4">
        <text>a 1,2-diacyl-3-O-(beta-D-glucopyranosyl)-sn-glycerol + UDP-alpha-D-glucose = a 1,2-diacyl-3-O-(beta-D-Glc-(1-&gt;6)-beta-D-Glc)-sn-glycerol + UDP + H(+)</text>
        <dbReference type="Rhea" id="RHEA:39031"/>
        <dbReference type="ChEBI" id="CHEBI:15378"/>
        <dbReference type="ChEBI" id="CHEBI:58223"/>
        <dbReference type="ChEBI" id="CHEBI:58885"/>
        <dbReference type="ChEBI" id="CHEBI:75799"/>
        <dbReference type="ChEBI" id="CHEBI:76264"/>
        <dbReference type="EC" id="2.4.1.315"/>
    </reaction>
</comment>
<comment type="catalytic activity">
    <reaction evidence="4">
        <text>a 1,2-diacyl-3-O-(beta-D-Glc-(1-&gt;6)-beta-D-Glc)-sn-glycerol + UDP-alpha-D-glucose = a 1,2-diacyl-3-O-(beta-D-Glc-(1-&gt;6)-beta-D-Glc-(1-&gt;6)-beta-D-Glc)-sn-glycerol + UDP + H(+)</text>
        <dbReference type="Rhea" id="RHEA:39027"/>
        <dbReference type="ChEBI" id="CHEBI:15378"/>
        <dbReference type="ChEBI" id="CHEBI:58223"/>
        <dbReference type="ChEBI" id="CHEBI:58885"/>
        <dbReference type="ChEBI" id="CHEBI:76264"/>
        <dbReference type="ChEBI" id="CHEBI:76265"/>
        <dbReference type="EC" id="2.4.1.315"/>
    </reaction>
</comment>
<comment type="catalytic activity">
    <reaction evidence="1 4">
        <text>a 1,2-diacyl-sn-glycerol + UDP-alpha-D-glucose = a 1,2-diacyl-3-O-(beta-D-glucopyranosyl)-sn-glycerol + UDP + H(+)</text>
        <dbReference type="Rhea" id="RHEA:17285"/>
        <dbReference type="ChEBI" id="CHEBI:15378"/>
        <dbReference type="ChEBI" id="CHEBI:17815"/>
        <dbReference type="ChEBI" id="CHEBI:58223"/>
        <dbReference type="ChEBI" id="CHEBI:58885"/>
        <dbReference type="ChEBI" id="CHEBI:75799"/>
    </reaction>
</comment>
<comment type="pathway">
    <text evidence="1">Glycolipid metabolism; diglucosyl-diacylglycerol biosynthesis.</text>
</comment>
<comment type="interaction">
    <interactant intactId="EBI-1567571">
        <id>P54166</id>
    </interactant>
    <interactant intactId="EBI-1569853">
        <id>P17865</id>
        <label>ftsZ</label>
    </interactant>
    <organismsDiffer>false</organismsDiffer>
    <experiments>3</experiments>
</comment>
<comment type="subcellular location">
    <subcellularLocation>
        <location evidence="1">Cell membrane</location>
    </subcellularLocation>
    <text evidence="2">Localized in both septal membrane.</text>
</comment>
<comment type="disruption phenotype">
    <text evidence="3">Cells displayed reduced and abnormal cell size/shape, no effect on flotillin cluster numbers or size.</text>
</comment>
<comment type="similarity">
    <text evidence="1">Belongs to the glycosyltransferase 28 family. UgtP subfamily.</text>
</comment>
<keyword id="KW-0119">Carbohydrate metabolism</keyword>
<keyword id="KW-1003">Cell membrane</keyword>
<keyword id="KW-0328">Glycosyltransferase</keyword>
<keyword id="KW-0444">Lipid biosynthesis</keyword>
<keyword id="KW-0443">Lipid metabolism</keyword>
<keyword id="KW-0472">Membrane</keyword>
<keyword id="KW-1185">Reference proteome</keyword>
<keyword id="KW-0808">Transferase</keyword>
<reference key="1">
    <citation type="journal article" date="1996" name="Microbiology">
        <title>Organization of the Bacillus subtilis 168 chromosome between kdg and the attachment site of the SP beta prophage: use of long accurate PCR and yeast artificial chromosomes for sequencing.</title>
        <authorList>
            <person name="Capuano V."/>
            <person name="Galleron N."/>
            <person name="Pujic P."/>
            <person name="Sorokin A."/>
            <person name="Ehrlich S.D."/>
        </authorList>
    </citation>
    <scope>NUCLEOTIDE SEQUENCE [GENOMIC DNA]</scope>
    <source>
        <strain>168 / Marburg / ATCC 6051 / DSM 10 / JCM 1465 / NBRC 13719 / NCIMB 3610 / NRRL NRS-744 / VKM B-501</strain>
    </source>
</reference>
<reference key="2">
    <citation type="journal article" date="1997" name="Nature">
        <title>The complete genome sequence of the Gram-positive bacterium Bacillus subtilis.</title>
        <authorList>
            <person name="Kunst F."/>
            <person name="Ogasawara N."/>
            <person name="Moszer I."/>
            <person name="Albertini A.M."/>
            <person name="Alloni G."/>
            <person name="Azevedo V."/>
            <person name="Bertero M.G."/>
            <person name="Bessieres P."/>
            <person name="Bolotin A."/>
            <person name="Borchert S."/>
            <person name="Borriss R."/>
            <person name="Boursier L."/>
            <person name="Brans A."/>
            <person name="Braun M."/>
            <person name="Brignell S.C."/>
            <person name="Bron S."/>
            <person name="Brouillet S."/>
            <person name="Bruschi C.V."/>
            <person name="Caldwell B."/>
            <person name="Capuano V."/>
            <person name="Carter N.M."/>
            <person name="Choi S.-K."/>
            <person name="Codani J.-J."/>
            <person name="Connerton I.F."/>
            <person name="Cummings N.J."/>
            <person name="Daniel R.A."/>
            <person name="Denizot F."/>
            <person name="Devine K.M."/>
            <person name="Duesterhoeft A."/>
            <person name="Ehrlich S.D."/>
            <person name="Emmerson P.T."/>
            <person name="Entian K.-D."/>
            <person name="Errington J."/>
            <person name="Fabret C."/>
            <person name="Ferrari E."/>
            <person name="Foulger D."/>
            <person name="Fritz C."/>
            <person name="Fujita M."/>
            <person name="Fujita Y."/>
            <person name="Fuma S."/>
            <person name="Galizzi A."/>
            <person name="Galleron N."/>
            <person name="Ghim S.-Y."/>
            <person name="Glaser P."/>
            <person name="Goffeau A."/>
            <person name="Golightly E.J."/>
            <person name="Grandi G."/>
            <person name="Guiseppi G."/>
            <person name="Guy B.J."/>
            <person name="Haga K."/>
            <person name="Haiech J."/>
            <person name="Harwood C.R."/>
            <person name="Henaut A."/>
            <person name="Hilbert H."/>
            <person name="Holsappel S."/>
            <person name="Hosono S."/>
            <person name="Hullo M.-F."/>
            <person name="Itaya M."/>
            <person name="Jones L.-M."/>
            <person name="Joris B."/>
            <person name="Karamata D."/>
            <person name="Kasahara Y."/>
            <person name="Klaerr-Blanchard M."/>
            <person name="Klein C."/>
            <person name="Kobayashi Y."/>
            <person name="Koetter P."/>
            <person name="Koningstein G."/>
            <person name="Krogh S."/>
            <person name="Kumano M."/>
            <person name="Kurita K."/>
            <person name="Lapidus A."/>
            <person name="Lardinois S."/>
            <person name="Lauber J."/>
            <person name="Lazarevic V."/>
            <person name="Lee S.-M."/>
            <person name="Levine A."/>
            <person name="Liu H."/>
            <person name="Masuda S."/>
            <person name="Mauel C."/>
            <person name="Medigue C."/>
            <person name="Medina N."/>
            <person name="Mellado R.P."/>
            <person name="Mizuno M."/>
            <person name="Moestl D."/>
            <person name="Nakai S."/>
            <person name="Noback M."/>
            <person name="Noone D."/>
            <person name="O'Reilly M."/>
            <person name="Ogawa K."/>
            <person name="Ogiwara A."/>
            <person name="Oudega B."/>
            <person name="Park S.-H."/>
            <person name="Parro V."/>
            <person name="Pohl T.M."/>
            <person name="Portetelle D."/>
            <person name="Porwollik S."/>
            <person name="Prescott A.M."/>
            <person name="Presecan E."/>
            <person name="Pujic P."/>
            <person name="Purnelle B."/>
            <person name="Rapoport G."/>
            <person name="Rey M."/>
            <person name="Reynolds S."/>
            <person name="Rieger M."/>
            <person name="Rivolta C."/>
            <person name="Rocha E."/>
            <person name="Roche B."/>
            <person name="Rose M."/>
            <person name="Sadaie Y."/>
            <person name="Sato T."/>
            <person name="Scanlan E."/>
            <person name="Schleich S."/>
            <person name="Schroeter R."/>
            <person name="Scoffone F."/>
            <person name="Sekiguchi J."/>
            <person name="Sekowska A."/>
            <person name="Seror S.J."/>
            <person name="Serror P."/>
            <person name="Shin B.-S."/>
            <person name="Soldo B."/>
            <person name="Sorokin A."/>
            <person name="Tacconi E."/>
            <person name="Takagi T."/>
            <person name="Takahashi H."/>
            <person name="Takemaru K."/>
            <person name="Takeuchi M."/>
            <person name="Tamakoshi A."/>
            <person name="Tanaka T."/>
            <person name="Terpstra P."/>
            <person name="Tognoni A."/>
            <person name="Tosato V."/>
            <person name="Uchiyama S."/>
            <person name="Vandenbol M."/>
            <person name="Vannier F."/>
            <person name="Vassarotti A."/>
            <person name="Viari A."/>
            <person name="Wambutt R."/>
            <person name="Wedler E."/>
            <person name="Wedler H."/>
            <person name="Weitzenegger T."/>
            <person name="Winters P."/>
            <person name="Wipat A."/>
            <person name="Yamamoto H."/>
            <person name="Yamane K."/>
            <person name="Yasumoto K."/>
            <person name="Yata K."/>
            <person name="Yoshida K."/>
            <person name="Yoshikawa H.-F."/>
            <person name="Zumstein E."/>
            <person name="Yoshikawa H."/>
            <person name="Danchin A."/>
        </authorList>
    </citation>
    <scope>NUCLEOTIDE SEQUENCE [LARGE SCALE GENOMIC DNA]</scope>
    <source>
        <strain>168</strain>
    </source>
</reference>
<reference key="3">
    <citation type="journal article" date="1998" name="Mol. Microbiol.">
        <title>A UDP glucosyltransferase from Bacillus subtilis successively transfers up to four glucose residues to 1,2-diacylglycerol: expression of ypfP in Escherichia coli and structural analysis of its reaction products.</title>
        <authorList>
            <person name="Jorasch P."/>
            <person name="Wolter F.P."/>
            <person name="Zaehringer U."/>
            <person name="Heinz E."/>
        </authorList>
    </citation>
    <scope>FUNCTION</scope>
    <scope>CATALYTIC ACTIVITY</scope>
    <scope>PROCESSIVITY</scope>
    <scope>SUBSTRATE SPECIFICITY</scope>
    <scope>ROLE IN GLYCOLIPID BIOSYNTHESIS</scope>
    <source>
        <strain>168 / 60015</strain>
    </source>
</reference>
<reference key="4">
    <citation type="journal article" date="2005" name="J. Bacteriol.">
        <title>Phosphatidylethanolamine domains and localization of phospholipid synthases in Bacillus subtilis membranes.</title>
        <authorList>
            <person name="Nishibori A."/>
            <person name="Kusaka J."/>
            <person name="Hara H."/>
            <person name="Umeda M."/>
            <person name="Matsumoto K."/>
        </authorList>
    </citation>
    <scope>SUBCELLULAR LOCATION</scope>
</reference>
<reference key="5">
    <citation type="journal article" date="2016" name="PLoS Genet.">
        <title>Super Resolution Fluorescence Microscopy and Tracking of Bacterial Flotillin (Reggie) Paralogs Provide Evidence for Defined-Sized Protein Microdomains within the Bacterial Membrane but Absence of Clusters Containing Detergent-Resistant Proteins.</title>
        <authorList>
            <person name="Dempwolff F."/>
            <person name="Schmidt F.K."/>
            <person name="Hervas A.B."/>
            <person name="Stroh A."/>
            <person name="Roesch T.C."/>
            <person name="Riese C.N."/>
            <person name="Dersch S."/>
            <person name="Heimerl T."/>
            <person name="Lucena D."/>
            <person name="Huelsbusch N."/>
            <person name="Stuermer C.A."/>
            <person name="Takeshita N."/>
            <person name="Fischer R."/>
            <person name="Eckhardt B."/>
            <person name="Graumann P.L."/>
        </authorList>
    </citation>
    <scope>DISRUPTION PHENOTYPE</scope>
    <source>
        <strain>168</strain>
    </source>
</reference>